<sequence>MLAPDTFWLACLEYFENELSAQQFNTWIKPLRLQLSDDSPEPALRLIAPNRFVLQWVKDNFLSDITQMAENHFARPVQLQLELAGQIPASASPSTGRNNGTASHSITAVFDAPTESAQKAPKDTKDTKDAKEKQEKNPTRLNPSFTFNTFVTGKANQLARAGAIQVAERPGVAYNPFFIYGGVGLGKTHLIQAIGNFVVEQNPAAKVRYIHSEQYVSDVVRAYQHKAFDEFKRYYHSLDLLLIDDIQFFGGKNRTQEEFFYAFNALIEAHKQVIITCDSYPKEIAGMEERLISRFGWGLTVAVEPPELEMRVAILLKKALMEDIILDESVAFFIAKHIRSNVRELEGALKRVVAYSRFTGHALTLDLAREALKDLLAVQNRQISIENIQKTVADYYKIKVAEMYSKKRSRVVARPRQMAMAISKELTPLSLPDIGEAFGGRDHTTVLHGYRKIAELRASDPAVNRDFNTLLHILRG</sequence>
<feature type="chain" id="PRO_1000048680" description="Chromosomal replication initiator protein DnaA">
    <location>
        <begin position="1"/>
        <end position="476"/>
    </location>
</feature>
<feature type="region of interest" description="Domain I, interacts with DnaA modulators" evidence="1">
    <location>
        <begin position="1"/>
        <end position="75"/>
    </location>
</feature>
<feature type="region of interest" description="Domain II" evidence="1">
    <location>
        <begin position="75"/>
        <end position="139"/>
    </location>
</feature>
<feature type="region of interest" description="Disordered" evidence="2">
    <location>
        <begin position="110"/>
        <end position="141"/>
    </location>
</feature>
<feature type="region of interest" description="Domain III, AAA+ region" evidence="1">
    <location>
        <begin position="140"/>
        <end position="356"/>
    </location>
</feature>
<feature type="region of interest" description="Domain IV, binds dsDNA" evidence="1">
    <location>
        <begin position="357"/>
        <end position="476"/>
    </location>
</feature>
<feature type="compositionally biased region" description="Basic and acidic residues" evidence="2">
    <location>
        <begin position="120"/>
        <end position="138"/>
    </location>
</feature>
<feature type="binding site" evidence="1">
    <location>
        <position position="184"/>
    </location>
    <ligand>
        <name>ATP</name>
        <dbReference type="ChEBI" id="CHEBI:30616"/>
    </ligand>
</feature>
<feature type="binding site" evidence="1">
    <location>
        <position position="186"/>
    </location>
    <ligand>
        <name>ATP</name>
        <dbReference type="ChEBI" id="CHEBI:30616"/>
    </ligand>
</feature>
<feature type="binding site" evidence="1">
    <location>
        <position position="187"/>
    </location>
    <ligand>
        <name>ATP</name>
        <dbReference type="ChEBI" id="CHEBI:30616"/>
    </ligand>
</feature>
<feature type="binding site" evidence="1">
    <location>
        <position position="188"/>
    </location>
    <ligand>
        <name>ATP</name>
        <dbReference type="ChEBI" id="CHEBI:30616"/>
    </ligand>
</feature>
<gene>
    <name evidence="1" type="primary">dnaA</name>
    <name type="ordered locus">Nmul_A0001</name>
</gene>
<reference key="1">
    <citation type="submission" date="2005-08" db="EMBL/GenBank/DDBJ databases">
        <title>Complete sequence of chromosome 1 of Nitrosospira multiformis ATCC 25196.</title>
        <authorList>
            <person name="Copeland A."/>
            <person name="Lucas S."/>
            <person name="Lapidus A."/>
            <person name="Barry K."/>
            <person name="Detter J.C."/>
            <person name="Glavina T."/>
            <person name="Hammon N."/>
            <person name="Israni S."/>
            <person name="Pitluck S."/>
            <person name="Chain P."/>
            <person name="Malfatti S."/>
            <person name="Shin M."/>
            <person name="Vergez L."/>
            <person name="Schmutz J."/>
            <person name="Larimer F."/>
            <person name="Land M."/>
            <person name="Hauser L."/>
            <person name="Kyrpides N."/>
            <person name="Lykidis A."/>
            <person name="Richardson P."/>
        </authorList>
    </citation>
    <scope>NUCLEOTIDE SEQUENCE [LARGE SCALE GENOMIC DNA]</scope>
    <source>
        <strain>ATCC 25196 / NCIMB 11849 / C 71</strain>
    </source>
</reference>
<comment type="function">
    <text evidence="1">Plays an essential role in the initiation and regulation of chromosomal replication. ATP-DnaA binds to the origin of replication (oriC) to initiate formation of the DNA replication initiation complex once per cell cycle. Binds the DnaA box (a 9 base pair repeat at the origin) and separates the double-stranded (ds)DNA. Forms a right-handed helical filament on oriC DNA; dsDNA binds to the exterior of the filament while single-stranded (ss)DNA is stabiized in the filament's interior. The ATP-DnaA-oriC complex binds and stabilizes one strand of the AT-rich DNA unwinding element (DUE), permitting loading of DNA polymerase. After initiation quickly degrades to an ADP-DnaA complex that is not apt for DNA replication. Binds acidic phospholipids.</text>
</comment>
<comment type="subunit">
    <text evidence="1">Oligomerizes as a right-handed, spiral filament on DNA at oriC.</text>
</comment>
<comment type="subcellular location">
    <subcellularLocation>
        <location evidence="1">Cytoplasm</location>
    </subcellularLocation>
</comment>
<comment type="domain">
    <text evidence="1">Domain I is involved in oligomerization and binding regulators, domain II is flexibile and of varying length in different bacteria, domain III forms the AAA+ region, while domain IV binds dsDNA.</text>
</comment>
<comment type="similarity">
    <text evidence="1">Belongs to the DnaA family.</text>
</comment>
<organism>
    <name type="scientific">Nitrosospira multiformis (strain ATCC 25196 / NCIMB 11849 / C 71)</name>
    <dbReference type="NCBI Taxonomy" id="323848"/>
    <lineage>
        <taxon>Bacteria</taxon>
        <taxon>Pseudomonadati</taxon>
        <taxon>Pseudomonadota</taxon>
        <taxon>Betaproteobacteria</taxon>
        <taxon>Nitrosomonadales</taxon>
        <taxon>Nitrosomonadaceae</taxon>
        <taxon>Nitrosospira</taxon>
    </lineage>
</organism>
<evidence type="ECO:0000255" key="1">
    <source>
        <dbReference type="HAMAP-Rule" id="MF_00377"/>
    </source>
</evidence>
<evidence type="ECO:0000256" key="2">
    <source>
        <dbReference type="SAM" id="MobiDB-lite"/>
    </source>
</evidence>
<name>DNAA_NITMU</name>
<protein>
    <recommendedName>
        <fullName evidence="1">Chromosomal replication initiator protein DnaA</fullName>
    </recommendedName>
</protein>
<keyword id="KW-0067">ATP-binding</keyword>
<keyword id="KW-0963">Cytoplasm</keyword>
<keyword id="KW-0235">DNA replication</keyword>
<keyword id="KW-0238">DNA-binding</keyword>
<keyword id="KW-0446">Lipid-binding</keyword>
<keyword id="KW-0547">Nucleotide-binding</keyword>
<keyword id="KW-1185">Reference proteome</keyword>
<dbReference type="EMBL" id="CP000103">
    <property type="protein sequence ID" value="ABB73310.1"/>
    <property type="molecule type" value="Genomic_DNA"/>
</dbReference>
<dbReference type="RefSeq" id="WP_011379365.1">
    <property type="nucleotide sequence ID" value="NC_007614.1"/>
</dbReference>
<dbReference type="SMR" id="Q2YD61"/>
<dbReference type="STRING" id="323848.Nmul_A0001"/>
<dbReference type="KEGG" id="nmu:Nmul_A0001"/>
<dbReference type="eggNOG" id="COG0593">
    <property type="taxonomic scope" value="Bacteria"/>
</dbReference>
<dbReference type="HOGENOM" id="CLU_026910_0_1_4"/>
<dbReference type="OrthoDB" id="9807019at2"/>
<dbReference type="Proteomes" id="UP000002718">
    <property type="component" value="Chromosome"/>
</dbReference>
<dbReference type="GO" id="GO:0005737">
    <property type="term" value="C:cytoplasm"/>
    <property type="evidence" value="ECO:0007669"/>
    <property type="project" value="UniProtKB-SubCell"/>
</dbReference>
<dbReference type="GO" id="GO:0005886">
    <property type="term" value="C:plasma membrane"/>
    <property type="evidence" value="ECO:0007669"/>
    <property type="project" value="TreeGrafter"/>
</dbReference>
<dbReference type="GO" id="GO:0005524">
    <property type="term" value="F:ATP binding"/>
    <property type="evidence" value="ECO:0007669"/>
    <property type="project" value="UniProtKB-UniRule"/>
</dbReference>
<dbReference type="GO" id="GO:0016887">
    <property type="term" value="F:ATP hydrolysis activity"/>
    <property type="evidence" value="ECO:0007669"/>
    <property type="project" value="InterPro"/>
</dbReference>
<dbReference type="GO" id="GO:0003688">
    <property type="term" value="F:DNA replication origin binding"/>
    <property type="evidence" value="ECO:0007669"/>
    <property type="project" value="UniProtKB-UniRule"/>
</dbReference>
<dbReference type="GO" id="GO:0008289">
    <property type="term" value="F:lipid binding"/>
    <property type="evidence" value="ECO:0007669"/>
    <property type="project" value="UniProtKB-KW"/>
</dbReference>
<dbReference type="GO" id="GO:0006270">
    <property type="term" value="P:DNA replication initiation"/>
    <property type="evidence" value="ECO:0007669"/>
    <property type="project" value="UniProtKB-UniRule"/>
</dbReference>
<dbReference type="GO" id="GO:0006275">
    <property type="term" value="P:regulation of DNA replication"/>
    <property type="evidence" value="ECO:0007669"/>
    <property type="project" value="UniProtKB-UniRule"/>
</dbReference>
<dbReference type="CDD" id="cd00009">
    <property type="entry name" value="AAA"/>
    <property type="match status" value="1"/>
</dbReference>
<dbReference type="CDD" id="cd06571">
    <property type="entry name" value="Bac_DnaA_C"/>
    <property type="match status" value="1"/>
</dbReference>
<dbReference type="FunFam" id="1.10.8.60:FF:000003">
    <property type="entry name" value="Chromosomal replication initiator protein DnaA"/>
    <property type="match status" value="1"/>
</dbReference>
<dbReference type="FunFam" id="3.40.50.300:FF:000668">
    <property type="entry name" value="Chromosomal replication initiator protein DnaA"/>
    <property type="match status" value="1"/>
</dbReference>
<dbReference type="Gene3D" id="1.10.1750.10">
    <property type="match status" value="1"/>
</dbReference>
<dbReference type="Gene3D" id="1.10.8.60">
    <property type="match status" value="1"/>
</dbReference>
<dbReference type="Gene3D" id="3.30.300.180">
    <property type="match status" value="1"/>
</dbReference>
<dbReference type="Gene3D" id="3.40.50.300">
    <property type="entry name" value="P-loop containing nucleotide triphosphate hydrolases"/>
    <property type="match status" value="1"/>
</dbReference>
<dbReference type="HAMAP" id="MF_00377">
    <property type="entry name" value="DnaA_bact"/>
    <property type="match status" value="1"/>
</dbReference>
<dbReference type="InterPro" id="IPR003593">
    <property type="entry name" value="AAA+_ATPase"/>
</dbReference>
<dbReference type="InterPro" id="IPR001957">
    <property type="entry name" value="Chromosome_initiator_DnaA"/>
</dbReference>
<dbReference type="InterPro" id="IPR020591">
    <property type="entry name" value="Chromosome_initiator_DnaA-like"/>
</dbReference>
<dbReference type="InterPro" id="IPR018312">
    <property type="entry name" value="Chromosome_initiator_DnaA_CS"/>
</dbReference>
<dbReference type="InterPro" id="IPR013159">
    <property type="entry name" value="DnaA_C"/>
</dbReference>
<dbReference type="InterPro" id="IPR013317">
    <property type="entry name" value="DnaA_dom"/>
</dbReference>
<dbReference type="InterPro" id="IPR024633">
    <property type="entry name" value="DnaA_N_dom"/>
</dbReference>
<dbReference type="InterPro" id="IPR038454">
    <property type="entry name" value="DnaA_N_sf"/>
</dbReference>
<dbReference type="InterPro" id="IPR027417">
    <property type="entry name" value="P-loop_NTPase"/>
</dbReference>
<dbReference type="InterPro" id="IPR010921">
    <property type="entry name" value="Trp_repressor/repl_initiator"/>
</dbReference>
<dbReference type="NCBIfam" id="TIGR00362">
    <property type="entry name" value="DnaA"/>
    <property type="match status" value="1"/>
</dbReference>
<dbReference type="PANTHER" id="PTHR30050">
    <property type="entry name" value="CHROMOSOMAL REPLICATION INITIATOR PROTEIN DNAA"/>
    <property type="match status" value="1"/>
</dbReference>
<dbReference type="PANTHER" id="PTHR30050:SF2">
    <property type="entry name" value="CHROMOSOMAL REPLICATION INITIATOR PROTEIN DNAA"/>
    <property type="match status" value="1"/>
</dbReference>
<dbReference type="Pfam" id="PF00308">
    <property type="entry name" value="Bac_DnaA"/>
    <property type="match status" value="1"/>
</dbReference>
<dbReference type="Pfam" id="PF08299">
    <property type="entry name" value="Bac_DnaA_C"/>
    <property type="match status" value="1"/>
</dbReference>
<dbReference type="Pfam" id="PF11638">
    <property type="entry name" value="DnaA_N"/>
    <property type="match status" value="1"/>
</dbReference>
<dbReference type="PRINTS" id="PR00051">
    <property type="entry name" value="DNAA"/>
</dbReference>
<dbReference type="SMART" id="SM00382">
    <property type="entry name" value="AAA"/>
    <property type="match status" value="1"/>
</dbReference>
<dbReference type="SMART" id="SM00760">
    <property type="entry name" value="Bac_DnaA_C"/>
    <property type="match status" value="1"/>
</dbReference>
<dbReference type="SUPFAM" id="SSF52540">
    <property type="entry name" value="P-loop containing nucleoside triphosphate hydrolases"/>
    <property type="match status" value="1"/>
</dbReference>
<dbReference type="SUPFAM" id="SSF48295">
    <property type="entry name" value="TrpR-like"/>
    <property type="match status" value="1"/>
</dbReference>
<dbReference type="PROSITE" id="PS01008">
    <property type="entry name" value="DNAA"/>
    <property type="match status" value="1"/>
</dbReference>
<proteinExistence type="inferred from homology"/>
<accession>Q2YD61</accession>